<dbReference type="EC" id="4.2.3.5" evidence="1"/>
<dbReference type="EMBL" id="CP001721">
    <property type="protein sequence ID" value="ACV51091.1"/>
    <property type="molecule type" value="Genomic_DNA"/>
</dbReference>
<dbReference type="RefSeq" id="WP_012808748.1">
    <property type="nucleotide sequence ID" value="NC_013203.1"/>
</dbReference>
<dbReference type="SMR" id="C8WAF3"/>
<dbReference type="STRING" id="521095.Apar_0662"/>
<dbReference type="GeneID" id="84806186"/>
<dbReference type="KEGG" id="apv:Apar_0662"/>
<dbReference type="eggNOG" id="COG0082">
    <property type="taxonomic scope" value="Bacteria"/>
</dbReference>
<dbReference type="HOGENOM" id="CLU_034547_0_0_11"/>
<dbReference type="OrthoDB" id="9771806at2"/>
<dbReference type="UniPathway" id="UPA00053">
    <property type="reaction ID" value="UER00090"/>
</dbReference>
<dbReference type="Proteomes" id="UP000000960">
    <property type="component" value="Chromosome"/>
</dbReference>
<dbReference type="GO" id="GO:0005829">
    <property type="term" value="C:cytosol"/>
    <property type="evidence" value="ECO:0007669"/>
    <property type="project" value="TreeGrafter"/>
</dbReference>
<dbReference type="GO" id="GO:0004107">
    <property type="term" value="F:chorismate synthase activity"/>
    <property type="evidence" value="ECO:0007669"/>
    <property type="project" value="UniProtKB-UniRule"/>
</dbReference>
<dbReference type="GO" id="GO:0010181">
    <property type="term" value="F:FMN binding"/>
    <property type="evidence" value="ECO:0007669"/>
    <property type="project" value="TreeGrafter"/>
</dbReference>
<dbReference type="GO" id="GO:0008652">
    <property type="term" value="P:amino acid biosynthetic process"/>
    <property type="evidence" value="ECO:0007669"/>
    <property type="project" value="UniProtKB-KW"/>
</dbReference>
<dbReference type="GO" id="GO:0009073">
    <property type="term" value="P:aromatic amino acid family biosynthetic process"/>
    <property type="evidence" value="ECO:0007669"/>
    <property type="project" value="UniProtKB-KW"/>
</dbReference>
<dbReference type="GO" id="GO:0009423">
    <property type="term" value="P:chorismate biosynthetic process"/>
    <property type="evidence" value="ECO:0007669"/>
    <property type="project" value="UniProtKB-UniRule"/>
</dbReference>
<dbReference type="CDD" id="cd07304">
    <property type="entry name" value="Chorismate_synthase"/>
    <property type="match status" value="1"/>
</dbReference>
<dbReference type="Gene3D" id="3.60.150.10">
    <property type="entry name" value="Chorismate synthase AroC"/>
    <property type="match status" value="1"/>
</dbReference>
<dbReference type="HAMAP" id="MF_00300">
    <property type="entry name" value="Chorismate_synth"/>
    <property type="match status" value="1"/>
</dbReference>
<dbReference type="InterPro" id="IPR000453">
    <property type="entry name" value="Chorismate_synth"/>
</dbReference>
<dbReference type="InterPro" id="IPR035904">
    <property type="entry name" value="Chorismate_synth_AroC_sf"/>
</dbReference>
<dbReference type="NCBIfam" id="TIGR00033">
    <property type="entry name" value="aroC"/>
    <property type="match status" value="1"/>
</dbReference>
<dbReference type="NCBIfam" id="NF003793">
    <property type="entry name" value="PRK05382.1"/>
    <property type="match status" value="1"/>
</dbReference>
<dbReference type="PANTHER" id="PTHR21085">
    <property type="entry name" value="CHORISMATE SYNTHASE"/>
    <property type="match status" value="1"/>
</dbReference>
<dbReference type="PANTHER" id="PTHR21085:SF0">
    <property type="entry name" value="CHORISMATE SYNTHASE"/>
    <property type="match status" value="1"/>
</dbReference>
<dbReference type="Pfam" id="PF01264">
    <property type="entry name" value="Chorismate_synt"/>
    <property type="match status" value="1"/>
</dbReference>
<dbReference type="PIRSF" id="PIRSF001456">
    <property type="entry name" value="Chorismate_synth"/>
    <property type="match status" value="1"/>
</dbReference>
<dbReference type="SUPFAM" id="SSF103263">
    <property type="entry name" value="Chorismate synthase, AroC"/>
    <property type="match status" value="1"/>
</dbReference>
<comment type="function">
    <text evidence="1">Catalyzes the anti-1,4-elimination of the C-3 phosphate and the C-6 proR hydrogen from 5-enolpyruvylshikimate-3-phosphate (EPSP) to yield chorismate, which is the branch point compound that serves as the starting substrate for the three terminal pathways of aromatic amino acid biosynthesis. This reaction introduces a second double bond into the aromatic ring system.</text>
</comment>
<comment type="catalytic activity">
    <reaction evidence="1">
        <text>5-O-(1-carboxyvinyl)-3-phosphoshikimate = chorismate + phosphate</text>
        <dbReference type="Rhea" id="RHEA:21020"/>
        <dbReference type="ChEBI" id="CHEBI:29748"/>
        <dbReference type="ChEBI" id="CHEBI:43474"/>
        <dbReference type="ChEBI" id="CHEBI:57701"/>
        <dbReference type="EC" id="4.2.3.5"/>
    </reaction>
</comment>
<comment type="cofactor">
    <cofactor evidence="1">
        <name>FMNH2</name>
        <dbReference type="ChEBI" id="CHEBI:57618"/>
    </cofactor>
    <text evidence="1">Reduced FMN (FMNH(2)).</text>
</comment>
<comment type="pathway">
    <text evidence="1">Metabolic intermediate biosynthesis; chorismate biosynthesis; chorismate from D-erythrose 4-phosphate and phosphoenolpyruvate: step 7/7.</text>
</comment>
<comment type="subunit">
    <text evidence="1">Homotetramer.</text>
</comment>
<comment type="similarity">
    <text evidence="1">Belongs to the chorismate synthase family.</text>
</comment>
<proteinExistence type="inferred from homology"/>
<reference key="1">
    <citation type="journal article" date="2009" name="Stand. Genomic Sci.">
        <title>Complete genome sequence of Atopobium parvulum type strain (IPP 1246).</title>
        <authorList>
            <person name="Copeland A."/>
            <person name="Sikorski J."/>
            <person name="Lapidus A."/>
            <person name="Nolan M."/>
            <person name="Del Rio T.G."/>
            <person name="Lucas S."/>
            <person name="Chen F."/>
            <person name="Tice H."/>
            <person name="Pitluck S."/>
            <person name="Cheng J.F."/>
            <person name="Pukall R."/>
            <person name="Chertkov O."/>
            <person name="Brettin T."/>
            <person name="Han C."/>
            <person name="Detter J.C."/>
            <person name="Kuske C."/>
            <person name="Bruce D."/>
            <person name="Goodwin L."/>
            <person name="Ivanova N."/>
            <person name="Mavromatis K."/>
            <person name="Mikhailova N."/>
            <person name="Chen A."/>
            <person name="Palaniappan K."/>
            <person name="Chain P."/>
            <person name="Rohde M."/>
            <person name="Goker M."/>
            <person name="Bristow J."/>
            <person name="Eisen J.A."/>
            <person name="Markowitz V."/>
            <person name="Hugenholtz P."/>
            <person name="Kyrpides N.C."/>
            <person name="Klenk H.P."/>
            <person name="Detter J.C."/>
        </authorList>
    </citation>
    <scope>NUCLEOTIDE SEQUENCE [LARGE SCALE GENOMIC DNA]</scope>
    <source>
        <strain>ATCC 33793 / DSM 20469 / CCUG 32760 / JCM 10300 / KCTC 3663 / VPI 0546 / 1246</strain>
    </source>
</reference>
<gene>
    <name evidence="1" type="primary">aroC</name>
    <name type="ordered locus">Apar_0662</name>
</gene>
<name>AROC_LANP1</name>
<sequence length="380" mass="40578">MMTSTFGTTVKVSIFGESHAPKIGCTIEGLPAGFTVDLHELKTFLQRRSPSHPWDTPRKEIDNPKFVSGISAKGILDGFPLTAELPNNNVRQKDYTATKLVPRPGHADFSAWAKWGNSYKQTGGGHFSARLTAPLCIAGGIALQILHAQGITIAAHVLKIKNINDTPFKLIDNSVEANKLLALQMNQLLQAAPQELPFLDAQTGEKTRALLTQLRSEKNTVGGIIECVATGVPAGIGCPHFQGLENTISAAVFGVPAVKAIEFGSGMNVANLLGSENNDAYEVRDGSVVPTTNHAGGILGGISTGAPIWFRCALKPISSIGLSQHSVNLQTMESEQLVVQGRHDVTAVLRAVPCVESAFALALLDTLYSWPSEQNGYHND</sequence>
<organism>
    <name type="scientific">Lancefieldella parvula (strain ATCC 33793 / DSM 20469 / CCUG 32760 / JCM 10300 / KCTC 3663 / VPI 0546 / 1246)</name>
    <name type="common">Atopobium parvulum</name>
    <dbReference type="NCBI Taxonomy" id="521095"/>
    <lineage>
        <taxon>Bacteria</taxon>
        <taxon>Bacillati</taxon>
        <taxon>Actinomycetota</taxon>
        <taxon>Coriobacteriia</taxon>
        <taxon>Coriobacteriales</taxon>
        <taxon>Atopobiaceae</taxon>
        <taxon>Lancefieldella</taxon>
    </lineage>
</organism>
<evidence type="ECO:0000255" key="1">
    <source>
        <dbReference type="HAMAP-Rule" id="MF_00300"/>
    </source>
</evidence>
<keyword id="KW-0028">Amino-acid biosynthesis</keyword>
<keyword id="KW-0057">Aromatic amino acid biosynthesis</keyword>
<keyword id="KW-0274">FAD</keyword>
<keyword id="KW-0285">Flavoprotein</keyword>
<keyword id="KW-0288">FMN</keyword>
<keyword id="KW-0456">Lyase</keyword>
<keyword id="KW-0521">NADP</keyword>
<keyword id="KW-1185">Reference proteome</keyword>
<protein>
    <recommendedName>
        <fullName evidence="1">Chorismate synthase</fullName>
        <shortName evidence="1">CS</shortName>
        <ecNumber evidence="1">4.2.3.5</ecNumber>
    </recommendedName>
    <alternativeName>
        <fullName evidence="1">5-enolpyruvylshikimate-3-phosphate phospholyase</fullName>
    </alternativeName>
</protein>
<accession>C8WAF3</accession>
<feature type="chain" id="PRO_0000405964" description="Chorismate synthase">
    <location>
        <begin position="1"/>
        <end position="380"/>
    </location>
</feature>
<feature type="binding site" evidence="1">
    <location>
        <position position="48"/>
    </location>
    <ligand>
        <name>NADP(+)</name>
        <dbReference type="ChEBI" id="CHEBI:58349"/>
    </ligand>
</feature>
<feature type="binding site" evidence="1">
    <location>
        <begin position="126"/>
        <end position="128"/>
    </location>
    <ligand>
        <name>FMN</name>
        <dbReference type="ChEBI" id="CHEBI:58210"/>
    </ligand>
</feature>
<feature type="binding site" evidence="1">
    <location>
        <position position="300"/>
    </location>
    <ligand>
        <name>FMN</name>
        <dbReference type="ChEBI" id="CHEBI:58210"/>
    </ligand>
</feature>
<feature type="binding site" evidence="1">
    <location>
        <begin position="315"/>
        <end position="319"/>
    </location>
    <ligand>
        <name>FMN</name>
        <dbReference type="ChEBI" id="CHEBI:58210"/>
    </ligand>
</feature>
<feature type="binding site" evidence="1">
    <location>
        <position position="342"/>
    </location>
    <ligand>
        <name>FMN</name>
        <dbReference type="ChEBI" id="CHEBI:58210"/>
    </ligand>
</feature>